<keyword id="KW-0378">Hydrolase</keyword>
<keyword id="KW-0479">Metal-binding</keyword>
<keyword id="KW-1185">Reference proteome</keyword>
<feature type="chain" id="PRO_0000317649" description="D-phenylhydantoinase">
    <location>
        <begin position="1"/>
        <end position="461"/>
    </location>
</feature>
<feature type="binding site" evidence="1">
    <location>
        <position position="59"/>
    </location>
    <ligand>
        <name>a divalent metal cation</name>
        <dbReference type="ChEBI" id="CHEBI:60240"/>
        <label>1</label>
    </ligand>
</feature>
<feature type="binding site" evidence="1">
    <location>
        <position position="61"/>
    </location>
    <ligand>
        <name>a divalent metal cation</name>
        <dbReference type="ChEBI" id="CHEBI:60240"/>
        <label>1</label>
    </ligand>
</feature>
<feature type="binding site" description="via carbamate group" evidence="1">
    <location>
        <position position="151"/>
    </location>
    <ligand>
        <name>a divalent metal cation</name>
        <dbReference type="ChEBI" id="CHEBI:60240"/>
        <label>1</label>
    </ligand>
</feature>
<feature type="binding site" description="via carbamate group" evidence="1">
    <location>
        <position position="151"/>
    </location>
    <ligand>
        <name>a divalent metal cation</name>
        <dbReference type="ChEBI" id="CHEBI:60240"/>
        <label>2</label>
    </ligand>
</feature>
<feature type="binding site" evidence="1">
    <location>
        <position position="156"/>
    </location>
    <ligand>
        <name>substrate</name>
    </ligand>
</feature>
<feature type="binding site" evidence="1">
    <location>
        <position position="182"/>
    </location>
    <ligand>
        <name>a divalent metal cation</name>
        <dbReference type="ChEBI" id="CHEBI:60240"/>
        <label>2</label>
    </ligand>
</feature>
<feature type="binding site" evidence="1">
    <location>
        <position position="239"/>
    </location>
    <ligand>
        <name>a divalent metal cation</name>
        <dbReference type="ChEBI" id="CHEBI:60240"/>
        <label>2</label>
    </ligand>
</feature>
<feature type="binding site" evidence="1">
    <location>
        <position position="286"/>
    </location>
    <ligand>
        <name>substrate</name>
    </ligand>
</feature>
<feature type="binding site" evidence="1">
    <location>
        <position position="313"/>
    </location>
    <ligand>
        <name>a divalent metal cation</name>
        <dbReference type="ChEBI" id="CHEBI:60240"/>
        <label>1</label>
    </ligand>
</feature>
<feature type="binding site" evidence="1">
    <location>
        <position position="335"/>
    </location>
    <ligand>
        <name>substrate</name>
    </ligand>
</feature>
<feature type="modified residue" description="N6-carboxylysine" evidence="1">
    <location>
        <position position="151"/>
    </location>
</feature>
<proteinExistence type="inferred from homology"/>
<sequence>MRVLIKNGTVVNADGQAKQDLLIESGIVRQLGNNISPQLPYEEIDATGCYVFPGGVDVHTHFNIDVGIARSCDDFFTGTRAAACGGTTTIIDHMGFGPNGCRLRHQLEVYRGYAAHKAVIDYSFHGVIQHINHAILDEIPMMVEEGLSSFKLYLTYQYKLNDDEVLQALRRLHESGALTTVHPENDAAIASKRAEFIAAGLTAPRYHALSRPLECEAEAIARMINLAQIAGNAPLYIVHLSNGLGLDYLRLARANHQPVWVETCPQYLLLDERSYDTEDGMKFILSPPLRNVREQDKLWCGISDGAIDVVATDHCTFSMAQRLQISKGDFSRCPNGLPGVENRMQLLFSSGVMTGRITPERFVELTSAMPARLFGLWPQKGLLAPGSDGDVVIIDPRQSQQIQHRHLHDNADYSPWEGFTCQGAIVRTLSRGETIFCDGTFTGKAGRGRFLRRKPFVPPVL</sequence>
<name>PHYDA_ECO24</name>
<gene>
    <name evidence="1" type="primary">hyuA</name>
    <name type="ordered locus">EcE24377A_3198</name>
</gene>
<protein>
    <recommendedName>
        <fullName evidence="1">D-phenylhydantoinase</fullName>
        <ecNumber evidence="1">3.5.2.-</ecNumber>
    </recommendedName>
    <alternativeName>
        <fullName evidence="1">Hydantoin-utilizing enzyme HyuA</fullName>
    </alternativeName>
</protein>
<dbReference type="EC" id="3.5.2.-" evidence="1"/>
<dbReference type="EMBL" id="CP000800">
    <property type="protein sequence ID" value="ABV20702.1"/>
    <property type="molecule type" value="Genomic_DNA"/>
</dbReference>
<dbReference type="RefSeq" id="WP_001264452.1">
    <property type="nucleotide sequence ID" value="NC_009801.1"/>
</dbReference>
<dbReference type="SMR" id="A7ZQY1"/>
<dbReference type="GeneID" id="93779129"/>
<dbReference type="KEGG" id="ecw:EcE24377A_3198"/>
<dbReference type="HOGENOM" id="CLU_015572_2_0_6"/>
<dbReference type="Proteomes" id="UP000001122">
    <property type="component" value="Chromosome"/>
</dbReference>
<dbReference type="GO" id="GO:0005829">
    <property type="term" value="C:cytosol"/>
    <property type="evidence" value="ECO:0007669"/>
    <property type="project" value="TreeGrafter"/>
</dbReference>
<dbReference type="GO" id="GO:0016812">
    <property type="term" value="F:hydrolase activity, acting on carbon-nitrogen (but not peptide) bonds, in cyclic amides"/>
    <property type="evidence" value="ECO:0007669"/>
    <property type="project" value="UniProtKB-UniRule"/>
</dbReference>
<dbReference type="GO" id="GO:0046872">
    <property type="term" value="F:metal ion binding"/>
    <property type="evidence" value="ECO:0007669"/>
    <property type="project" value="UniProtKB-KW"/>
</dbReference>
<dbReference type="GO" id="GO:0006208">
    <property type="term" value="P:pyrimidine nucleobase catabolic process"/>
    <property type="evidence" value="ECO:0007669"/>
    <property type="project" value="InterPro"/>
</dbReference>
<dbReference type="CDD" id="cd01314">
    <property type="entry name" value="D-HYD"/>
    <property type="match status" value="1"/>
</dbReference>
<dbReference type="FunFam" id="3.20.20.140:FF:000026">
    <property type="entry name" value="D-phenylhydantoinase"/>
    <property type="match status" value="1"/>
</dbReference>
<dbReference type="Gene3D" id="3.20.20.140">
    <property type="entry name" value="Metal-dependent hydrolases"/>
    <property type="match status" value="1"/>
</dbReference>
<dbReference type="Gene3D" id="2.30.40.10">
    <property type="entry name" value="Urease, subunit C, domain 1"/>
    <property type="match status" value="1"/>
</dbReference>
<dbReference type="HAMAP" id="MF_01644">
    <property type="entry name" value="D_hydantoinase"/>
    <property type="match status" value="1"/>
</dbReference>
<dbReference type="InterPro" id="IPR006680">
    <property type="entry name" value="Amidohydro-rel"/>
</dbReference>
<dbReference type="InterPro" id="IPR023766">
    <property type="entry name" value="D_phenylhydantoinase"/>
</dbReference>
<dbReference type="InterPro" id="IPR011778">
    <property type="entry name" value="Hydantoinase/dihydroPyrase"/>
</dbReference>
<dbReference type="InterPro" id="IPR011059">
    <property type="entry name" value="Metal-dep_hydrolase_composite"/>
</dbReference>
<dbReference type="InterPro" id="IPR032466">
    <property type="entry name" value="Metal_Hydrolase"/>
</dbReference>
<dbReference type="InterPro" id="IPR050378">
    <property type="entry name" value="Metallo-dep_Hydrolases_sf"/>
</dbReference>
<dbReference type="NCBIfam" id="TIGR02033">
    <property type="entry name" value="D-hydantoinase"/>
    <property type="match status" value="1"/>
</dbReference>
<dbReference type="PANTHER" id="PTHR11647:SF1">
    <property type="entry name" value="COLLAPSIN RESPONSE MEDIATOR PROTEIN"/>
    <property type="match status" value="1"/>
</dbReference>
<dbReference type="PANTHER" id="PTHR11647">
    <property type="entry name" value="HYDRANTOINASE/DIHYDROPYRIMIDINASE FAMILY MEMBER"/>
    <property type="match status" value="1"/>
</dbReference>
<dbReference type="Pfam" id="PF01979">
    <property type="entry name" value="Amidohydro_1"/>
    <property type="match status" value="1"/>
</dbReference>
<dbReference type="SUPFAM" id="SSF51338">
    <property type="entry name" value="Composite domain of metallo-dependent hydrolases"/>
    <property type="match status" value="2"/>
</dbReference>
<dbReference type="SUPFAM" id="SSF51556">
    <property type="entry name" value="Metallo-dependent hydrolases"/>
    <property type="match status" value="1"/>
</dbReference>
<accession>A7ZQY1</accession>
<comment type="function">
    <text evidence="1">Catalyzes the stereospecific hydrolysis of the cyclic amide bond of D-hydantoin derivatives with an aromatic side chains at the 5'-position. Has no activity on dihydropyrimidines. The physiological function is unknown.</text>
</comment>
<comment type="catalytic activity">
    <reaction evidence="1">
        <text>D-5-phenylhydantoin + H2O = N-carbamoyl-D-phenylglycine + H(+)</text>
        <dbReference type="Rhea" id="RHEA:51664"/>
        <dbReference type="ChEBI" id="CHEBI:15377"/>
        <dbReference type="ChEBI" id="CHEBI:15378"/>
        <dbReference type="ChEBI" id="CHEBI:140750"/>
        <dbReference type="ChEBI" id="CHEBI:140758"/>
    </reaction>
</comment>
<comment type="cofactor">
    <cofactor evidence="1">
        <name>a divalent metal cation</name>
        <dbReference type="ChEBI" id="CHEBI:60240"/>
    </cofactor>
    <text evidence="1">Binds 2 divalent metal cations per subunit.</text>
</comment>
<comment type="subunit">
    <text evidence="1">Homotetramer.</text>
</comment>
<comment type="PTM">
    <text evidence="1">Carboxylation allows a single lysine to coordinate two divalent metal cations.</text>
</comment>
<comment type="similarity">
    <text evidence="1">Belongs to the metallo-dependent hydrolases superfamily. Hydantoinase/dihydropyrimidinase family.</text>
</comment>
<organism>
    <name type="scientific">Escherichia coli O139:H28 (strain E24377A / ETEC)</name>
    <dbReference type="NCBI Taxonomy" id="331111"/>
    <lineage>
        <taxon>Bacteria</taxon>
        <taxon>Pseudomonadati</taxon>
        <taxon>Pseudomonadota</taxon>
        <taxon>Gammaproteobacteria</taxon>
        <taxon>Enterobacterales</taxon>
        <taxon>Enterobacteriaceae</taxon>
        <taxon>Escherichia</taxon>
    </lineage>
</organism>
<evidence type="ECO:0000255" key="1">
    <source>
        <dbReference type="HAMAP-Rule" id="MF_01644"/>
    </source>
</evidence>
<reference key="1">
    <citation type="journal article" date="2008" name="J. Bacteriol.">
        <title>The pangenome structure of Escherichia coli: comparative genomic analysis of E. coli commensal and pathogenic isolates.</title>
        <authorList>
            <person name="Rasko D.A."/>
            <person name="Rosovitz M.J."/>
            <person name="Myers G.S.A."/>
            <person name="Mongodin E.F."/>
            <person name="Fricke W.F."/>
            <person name="Gajer P."/>
            <person name="Crabtree J."/>
            <person name="Sebaihia M."/>
            <person name="Thomson N.R."/>
            <person name="Chaudhuri R."/>
            <person name="Henderson I.R."/>
            <person name="Sperandio V."/>
            <person name="Ravel J."/>
        </authorList>
    </citation>
    <scope>NUCLEOTIDE SEQUENCE [LARGE SCALE GENOMIC DNA]</scope>
    <source>
        <strain>E24377A / ETEC</strain>
    </source>
</reference>